<feature type="chain" id="PRO_1000010508" description="Acetylglutamate kinase">
    <location>
        <begin position="1"/>
        <end position="294"/>
    </location>
</feature>
<feature type="binding site" evidence="1">
    <location>
        <begin position="63"/>
        <end position="64"/>
    </location>
    <ligand>
        <name>substrate</name>
    </ligand>
</feature>
<feature type="binding site" evidence="1">
    <location>
        <position position="85"/>
    </location>
    <ligand>
        <name>substrate</name>
    </ligand>
</feature>
<feature type="binding site" evidence="1">
    <location>
        <position position="188"/>
    </location>
    <ligand>
        <name>substrate</name>
    </ligand>
</feature>
<feature type="site" description="Transition state stabilizer" evidence="1">
    <location>
        <position position="28"/>
    </location>
</feature>
<feature type="site" description="Transition state stabilizer" evidence="1">
    <location>
        <position position="251"/>
    </location>
</feature>
<comment type="function">
    <text evidence="1">Catalyzes the ATP-dependent phosphorylation of N-acetyl-L-glutamate.</text>
</comment>
<comment type="catalytic activity">
    <reaction evidence="1">
        <text>N-acetyl-L-glutamate + ATP = N-acetyl-L-glutamyl 5-phosphate + ADP</text>
        <dbReference type="Rhea" id="RHEA:14629"/>
        <dbReference type="ChEBI" id="CHEBI:30616"/>
        <dbReference type="ChEBI" id="CHEBI:44337"/>
        <dbReference type="ChEBI" id="CHEBI:57936"/>
        <dbReference type="ChEBI" id="CHEBI:456216"/>
        <dbReference type="EC" id="2.7.2.8"/>
    </reaction>
</comment>
<comment type="pathway">
    <text evidence="1">Amino-acid biosynthesis; L-arginine biosynthesis; N(2)-acetyl-L-ornithine from L-glutamate: step 2/4.</text>
</comment>
<comment type="subcellular location">
    <subcellularLocation>
        <location evidence="1">Cytoplasm</location>
    </subcellularLocation>
</comment>
<comment type="similarity">
    <text evidence="1">Belongs to the acetylglutamate kinase family. ArgB subfamily.</text>
</comment>
<name>ARGB_METM7</name>
<accession>A6VI50</accession>
<keyword id="KW-0028">Amino-acid biosynthesis</keyword>
<keyword id="KW-0055">Arginine biosynthesis</keyword>
<keyword id="KW-0067">ATP-binding</keyword>
<keyword id="KW-0963">Cytoplasm</keyword>
<keyword id="KW-0418">Kinase</keyword>
<keyword id="KW-0547">Nucleotide-binding</keyword>
<keyword id="KW-0808">Transferase</keyword>
<dbReference type="EC" id="2.7.2.8" evidence="1"/>
<dbReference type="EMBL" id="CP000745">
    <property type="protein sequence ID" value="ABR66126.1"/>
    <property type="molecule type" value="Genomic_DNA"/>
</dbReference>
<dbReference type="SMR" id="A6VI50"/>
<dbReference type="STRING" id="426368.MmarC7_1060"/>
<dbReference type="KEGG" id="mmz:MmarC7_1060"/>
<dbReference type="eggNOG" id="arCOG00862">
    <property type="taxonomic scope" value="Archaea"/>
</dbReference>
<dbReference type="HOGENOM" id="CLU_053680_0_0_2"/>
<dbReference type="OrthoDB" id="6816at2157"/>
<dbReference type="UniPathway" id="UPA00068">
    <property type="reaction ID" value="UER00107"/>
</dbReference>
<dbReference type="GO" id="GO:0005737">
    <property type="term" value="C:cytoplasm"/>
    <property type="evidence" value="ECO:0007669"/>
    <property type="project" value="UniProtKB-SubCell"/>
</dbReference>
<dbReference type="GO" id="GO:0003991">
    <property type="term" value="F:acetylglutamate kinase activity"/>
    <property type="evidence" value="ECO:0007669"/>
    <property type="project" value="UniProtKB-UniRule"/>
</dbReference>
<dbReference type="GO" id="GO:0005524">
    <property type="term" value="F:ATP binding"/>
    <property type="evidence" value="ECO:0007669"/>
    <property type="project" value="UniProtKB-UniRule"/>
</dbReference>
<dbReference type="GO" id="GO:0042450">
    <property type="term" value="P:arginine biosynthetic process via ornithine"/>
    <property type="evidence" value="ECO:0007669"/>
    <property type="project" value="UniProtKB-UniRule"/>
</dbReference>
<dbReference type="GO" id="GO:0006526">
    <property type="term" value="P:L-arginine biosynthetic process"/>
    <property type="evidence" value="ECO:0007669"/>
    <property type="project" value="UniProtKB-UniPathway"/>
</dbReference>
<dbReference type="CDD" id="cd04250">
    <property type="entry name" value="AAK_NAGK-C"/>
    <property type="match status" value="1"/>
</dbReference>
<dbReference type="FunFam" id="3.40.1160.10:FF:000004">
    <property type="entry name" value="Acetylglutamate kinase"/>
    <property type="match status" value="1"/>
</dbReference>
<dbReference type="Gene3D" id="3.40.1160.10">
    <property type="entry name" value="Acetylglutamate kinase-like"/>
    <property type="match status" value="1"/>
</dbReference>
<dbReference type="HAMAP" id="MF_00082">
    <property type="entry name" value="ArgB"/>
    <property type="match status" value="1"/>
</dbReference>
<dbReference type="InterPro" id="IPR036393">
    <property type="entry name" value="AceGlu_kinase-like_sf"/>
</dbReference>
<dbReference type="InterPro" id="IPR004662">
    <property type="entry name" value="AcgluKinase_fam"/>
</dbReference>
<dbReference type="InterPro" id="IPR037528">
    <property type="entry name" value="ArgB"/>
</dbReference>
<dbReference type="InterPro" id="IPR001048">
    <property type="entry name" value="Asp/Glu/Uridylate_kinase"/>
</dbReference>
<dbReference type="InterPro" id="IPR001057">
    <property type="entry name" value="Glu/AcGlu_kinase"/>
</dbReference>
<dbReference type="InterPro" id="IPR041727">
    <property type="entry name" value="NAGK-C"/>
</dbReference>
<dbReference type="NCBIfam" id="TIGR00761">
    <property type="entry name" value="argB"/>
    <property type="match status" value="1"/>
</dbReference>
<dbReference type="PANTHER" id="PTHR23342">
    <property type="entry name" value="N-ACETYLGLUTAMATE SYNTHASE"/>
    <property type="match status" value="1"/>
</dbReference>
<dbReference type="PANTHER" id="PTHR23342:SF0">
    <property type="entry name" value="N-ACETYLGLUTAMATE SYNTHASE, MITOCHONDRIAL"/>
    <property type="match status" value="1"/>
</dbReference>
<dbReference type="Pfam" id="PF00696">
    <property type="entry name" value="AA_kinase"/>
    <property type="match status" value="1"/>
</dbReference>
<dbReference type="PIRSF" id="PIRSF000728">
    <property type="entry name" value="NAGK"/>
    <property type="match status" value="1"/>
</dbReference>
<dbReference type="PRINTS" id="PR00474">
    <property type="entry name" value="GLU5KINASE"/>
</dbReference>
<dbReference type="SUPFAM" id="SSF53633">
    <property type="entry name" value="Carbamate kinase-like"/>
    <property type="match status" value="1"/>
</dbReference>
<gene>
    <name evidence="1" type="primary">argB</name>
    <name type="ordered locus">MmarC7_1060</name>
</gene>
<proteinExistence type="inferred from homology"/>
<protein>
    <recommendedName>
        <fullName evidence="1">Acetylglutamate kinase</fullName>
        <ecNumber evidence="1">2.7.2.8</ecNumber>
    </recommendedName>
    <alternativeName>
        <fullName evidence="1">N-acetyl-L-glutamate 5-phosphotransferase</fullName>
    </alternativeName>
    <alternativeName>
        <fullName evidence="1">NAG kinase</fullName>
        <shortName evidence="1">NAGK</shortName>
    </alternativeName>
</protein>
<sequence>MEEYTKAEILIEALPYICKFHDQKVLIKYGGHAMVNEQAKNWIAKDLVLLKYVGINPIVVHGGGPEINRAMEKMGKTPEFIHGLRVTDEETLEIVKMVLIGKINGDIVSKLELYGGKAVGLSGKSGQLIKAKKKIQYLMKDSQKIEVDLGMVGEVEHVDTKLIDILVEKRYIPVISPIGVDHQGNDLNLNADIAAGDIAGAMNAEKLIMVTDVDGIMDDIKDPSTLHRKLTISQIEGMIERGLITGGMIPKIEACINALDKGVQSVHIVNGKTPHAVLLEIFTEDGVGTMVVRE</sequence>
<organism>
    <name type="scientific">Methanococcus maripaludis (strain C7 / ATCC BAA-1331)</name>
    <dbReference type="NCBI Taxonomy" id="426368"/>
    <lineage>
        <taxon>Archaea</taxon>
        <taxon>Methanobacteriati</taxon>
        <taxon>Methanobacteriota</taxon>
        <taxon>Methanomada group</taxon>
        <taxon>Methanococci</taxon>
        <taxon>Methanococcales</taxon>
        <taxon>Methanococcaceae</taxon>
        <taxon>Methanococcus</taxon>
    </lineage>
</organism>
<evidence type="ECO:0000255" key="1">
    <source>
        <dbReference type="HAMAP-Rule" id="MF_00082"/>
    </source>
</evidence>
<reference key="1">
    <citation type="submission" date="2007-06" db="EMBL/GenBank/DDBJ databases">
        <title>Complete sequence of Methanococcus maripaludis C7.</title>
        <authorList>
            <consortium name="US DOE Joint Genome Institute"/>
            <person name="Copeland A."/>
            <person name="Lucas S."/>
            <person name="Lapidus A."/>
            <person name="Barry K."/>
            <person name="Glavina del Rio T."/>
            <person name="Dalin E."/>
            <person name="Tice H."/>
            <person name="Pitluck S."/>
            <person name="Clum A."/>
            <person name="Schmutz J."/>
            <person name="Larimer F."/>
            <person name="Land M."/>
            <person name="Hauser L."/>
            <person name="Kyrpides N."/>
            <person name="Anderson I."/>
            <person name="Sieprawska-Lupa M."/>
            <person name="Whitman W.B."/>
            <person name="Richardson P."/>
        </authorList>
    </citation>
    <scope>NUCLEOTIDE SEQUENCE [LARGE SCALE GENOMIC DNA]</scope>
    <source>
        <strain>C7 / ATCC BAA-1331</strain>
    </source>
</reference>